<feature type="chain" id="PRO_0000155264" description="Thymidylate kinase">
    <location>
        <begin position="1"/>
        <end position="212"/>
    </location>
</feature>
<feature type="binding site" evidence="1">
    <location>
        <begin position="15"/>
        <end position="22"/>
    </location>
    <ligand>
        <name>ATP</name>
        <dbReference type="ChEBI" id="CHEBI:30616"/>
    </ligand>
</feature>
<evidence type="ECO:0000255" key="1">
    <source>
        <dbReference type="HAMAP-Rule" id="MF_00165"/>
    </source>
</evidence>
<organism>
    <name type="scientific">Chromobacterium violaceum (strain ATCC 12472 / DSM 30191 / JCM 1249 / CCUG 213 / NBRC 12614 / NCIMB 9131 / NCTC 9757 / MK)</name>
    <dbReference type="NCBI Taxonomy" id="243365"/>
    <lineage>
        <taxon>Bacteria</taxon>
        <taxon>Pseudomonadati</taxon>
        <taxon>Pseudomonadota</taxon>
        <taxon>Betaproteobacteria</taxon>
        <taxon>Neisseriales</taxon>
        <taxon>Chromobacteriaceae</taxon>
        <taxon>Chromobacterium</taxon>
    </lineage>
</organism>
<gene>
    <name evidence="1" type="primary">tmk</name>
    <name type="ordered locus">CV_3723</name>
</gene>
<dbReference type="EC" id="2.7.4.9" evidence="1"/>
<dbReference type="EMBL" id="AE016825">
    <property type="protein sequence ID" value="AAQ61385.1"/>
    <property type="molecule type" value="Genomic_DNA"/>
</dbReference>
<dbReference type="RefSeq" id="WP_011137270.1">
    <property type="nucleotide sequence ID" value="NC_005085.1"/>
</dbReference>
<dbReference type="SMR" id="Q7NRQ7"/>
<dbReference type="STRING" id="243365.CV_3723"/>
<dbReference type="KEGG" id="cvi:CV_3723"/>
<dbReference type="eggNOG" id="COG0125">
    <property type="taxonomic scope" value="Bacteria"/>
</dbReference>
<dbReference type="HOGENOM" id="CLU_049131_0_2_4"/>
<dbReference type="OrthoDB" id="9774907at2"/>
<dbReference type="Proteomes" id="UP000001424">
    <property type="component" value="Chromosome"/>
</dbReference>
<dbReference type="GO" id="GO:0005829">
    <property type="term" value="C:cytosol"/>
    <property type="evidence" value="ECO:0007669"/>
    <property type="project" value="TreeGrafter"/>
</dbReference>
<dbReference type="GO" id="GO:0005524">
    <property type="term" value="F:ATP binding"/>
    <property type="evidence" value="ECO:0007669"/>
    <property type="project" value="UniProtKB-UniRule"/>
</dbReference>
<dbReference type="GO" id="GO:0004798">
    <property type="term" value="F:dTMP kinase activity"/>
    <property type="evidence" value="ECO:0007669"/>
    <property type="project" value="UniProtKB-UniRule"/>
</dbReference>
<dbReference type="GO" id="GO:0006233">
    <property type="term" value="P:dTDP biosynthetic process"/>
    <property type="evidence" value="ECO:0007669"/>
    <property type="project" value="InterPro"/>
</dbReference>
<dbReference type="GO" id="GO:0006235">
    <property type="term" value="P:dTTP biosynthetic process"/>
    <property type="evidence" value="ECO:0007669"/>
    <property type="project" value="UniProtKB-UniRule"/>
</dbReference>
<dbReference type="GO" id="GO:0006227">
    <property type="term" value="P:dUDP biosynthetic process"/>
    <property type="evidence" value="ECO:0007669"/>
    <property type="project" value="TreeGrafter"/>
</dbReference>
<dbReference type="CDD" id="cd01672">
    <property type="entry name" value="TMPK"/>
    <property type="match status" value="1"/>
</dbReference>
<dbReference type="FunFam" id="3.40.50.300:FF:000225">
    <property type="entry name" value="Thymidylate kinase"/>
    <property type="match status" value="1"/>
</dbReference>
<dbReference type="Gene3D" id="3.40.50.300">
    <property type="entry name" value="P-loop containing nucleotide triphosphate hydrolases"/>
    <property type="match status" value="1"/>
</dbReference>
<dbReference type="HAMAP" id="MF_00165">
    <property type="entry name" value="Thymidylate_kinase"/>
    <property type="match status" value="1"/>
</dbReference>
<dbReference type="InterPro" id="IPR027417">
    <property type="entry name" value="P-loop_NTPase"/>
</dbReference>
<dbReference type="InterPro" id="IPR039430">
    <property type="entry name" value="Thymidylate_kin-like_dom"/>
</dbReference>
<dbReference type="InterPro" id="IPR018095">
    <property type="entry name" value="Thymidylate_kin_CS"/>
</dbReference>
<dbReference type="InterPro" id="IPR018094">
    <property type="entry name" value="Thymidylate_kinase"/>
</dbReference>
<dbReference type="NCBIfam" id="TIGR00041">
    <property type="entry name" value="DTMP_kinase"/>
    <property type="match status" value="1"/>
</dbReference>
<dbReference type="PANTHER" id="PTHR10344">
    <property type="entry name" value="THYMIDYLATE KINASE"/>
    <property type="match status" value="1"/>
</dbReference>
<dbReference type="PANTHER" id="PTHR10344:SF4">
    <property type="entry name" value="UMP-CMP KINASE 2, MITOCHONDRIAL"/>
    <property type="match status" value="1"/>
</dbReference>
<dbReference type="Pfam" id="PF02223">
    <property type="entry name" value="Thymidylate_kin"/>
    <property type="match status" value="1"/>
</dbReference>
<dbReference type="SUPFAM" id="SSF52540">
    <property type="entry name" value="P-loop containing nucleoside triphosphate hydrolases"/>
    <property type="match status" value="1"/>
</dbReference>
<dbReference type="PROSITE" id="PS01331">
    <property type="entry name" value="THYMIDYLATE_KINASE"/>
    <property type="match status" value="1"/>
</dbReference>
<comment type="function">
    <text evidence="1">Phosphorylation of dTMP to form dTDP in both de novo and salvage pathways of dTTP synthesis.</text>
</comment>
<comment type="catalytic activity">
    <reaction evidence="1">
        <text>dTMP + ATP = dTDP + ADP</text>
        <dbReference type="Rhea" id="RHEA:13517"/>
        <dbReference type="ChEBI" id="CHEBI:30616"/>
        <dbReference type="ChEBI" id="CHEBI:58369"/>
        <dbReference type="ChEBI" id="CHEBI:63528"/>
        <dbReference type="ChEBI" id="CHEBI:456216"/>
        <dbReference type="EC" id="2.7.4.9"/>
    </reaction>
</comment>
<comment type="similarity">
    <text evidence="1">Belongs to the thymidylate kinase family.</text>
</comment>
<protein>
    <recommendedName>
        <fullName evidence="1">Thymidylate kinase</fullName>
        <ecNumber evidence="1">2.7.4.9</ecNumber>
    </recommendedName>
    <alternativeName>
        <fullName evidence="1">dTMP kinase</fullName>
    </alternativeName>
</protein>
<accession>Q7NRQ7</accession>
<reference key="1">
    <citation type="journal article" date="2003" name="Proc. Natl. Acad. Sci. U.S.A.">
        <title>The complete genome sequence of Chromobacterium violaceum reveals remarkable and exploitable bacterial adaptability.</title>
        <authorList>
            <person name="Vasconcelos A.T.R."/>
            <person name="de Almeida D.F."/>
            <person name="Hungria M."/>
            <person name="Guimaraes C.T."/>
            <person name="Antonio R.V."/>
            <person name="Almeida F.C."/>
            <person name="de Almeida L.G.P."/>
            <person name="de Almeida R."/>
            <person name="Alves-Gomes J.A."/>
            <person name="Andrade E.M."/>
            <person name="Araripe J."/>
            <person name="de Araujo M.F.F."/>
            <person name="Astolfi-Filho S."/>
            <person name="Azevedo V."/>
            <person name="Baptista A.J."/>
            <person name="Bataus L.A.M."/>
            <person name="Batista J.S."/>
            <person name="Belo A."/>
            <person name="van den Berg C."/>
            <person name="Bogo M."/>
            <person name="Bonatto S."/>
            <person name="Bordignon J."/>
            <person name="Brigido M.M."/>
            <person name="Brito C.A."/>
            <person name="Brocchi M."/>
            <person name="Burity H.A."/>
            <person name="Camargo A.A."/>
            <person name="Cardoso D.D.P."/>
            <person name="Carneiro N.P."/>
            <person name="Carraro D.M."/>
            <person name="Carvalho C.M.B."/>
            <person name="Cascardo J.C.M."/>
            <person name="Cavada B.S."/>
            <person name="Chueire L.M.O."/>
            <person name="Creczynski-Pasa T.B."/>
            <person name="Cunha-Junior N.C."/>
            <person name="Fagundes N."/>
            <person name="Falcao C.L."/>
            <person name="Fantinatti F."/>
            <person name="Farias I.P."/>
            <person name="Felipe M.S.S."/>
            <person name="Ferrari L.P."/>
            <person name="Ferro J.A."/>
            <person name="Ferro M.I.T."/>
            <person name="Franco G.R."/>
            <person name="Freitas N.S.A."/>
            <person name="Furlan L.R."/>
            <person name="Gazzinelli R.T."/>
            <person name="Gomes E.A."/>
            <person name="Goncalves P.R."/>
            <person name="Grangeiro T.B."/>
            <person name="Grattapaglia D."/>
            <person name="Grisard E.C."/>
            <person name="Hanna E.S."/>
            <person name="Jardim S.N."/>
            <person name="Laurino J."/>
            <person name="Leoi L.C.T."/>
            <person name="Lima L.F.A."/>
            <person name="Loureiro M.F."/>
            <person name="Lyra M.C.C.P."/>
            <person name="Madeira H.M.F."/>
            <person name="Manfio G.P."/>
            <person name="Maranhao A.Q."/>
            <person name="Martins W.S."/>
            <person name="di Mauro S.M.Z."/>
            <person name="de Medeiros S.R.B."/>
            <person name="Meissner R.V."/>
            <person name="Moreira M.A.M."/>
            <person name="Nascimento F.F."/>
            <person name="Nicolas M.F."/>
            <person name="Oliveira J.G."/>
            <person name="Oliveira S.C."/>
            <person name="Paixao R.F.C."/>
            <person name="Parente J.A."/>
            <person name="Pedrosa F.O."/>
            <person name="Pena S.D.J."/>
            <person name="Pereira J.O."/>
            <person name="Pereira M."/>
            <person name="Pinto L.S.R.C."/>
            <person name="Pinto L.S."/>
            <person name="Porto J.I.R."/>
            <person name="Potrich D.P."/>
            <person name="Ramalho-Neto C.E."/>
            <person name="Reis A.M.M."/>
            <person name="Rigo L.U."/>
            <person name="Rondinelli E."/>
            <person name="Santos E.B.P."/>
            <person name="Santos F.R."/>
            <person name="Schneider M.P.C."/>
            <person name="Seuanez H.N."/>
            <person name="Silva A.M.R."/>
            <person name="da Silva A.L.C."/>
            <person name="Silva D.W."/>
            <person name="Silva R."/>
            <person name="Simoes I.C."/>
            <person name="Simon D."/>
            <person name="Soares C.M.A."/>
            <person name="Soares R.B.A."/>
            <person name="Souza E.M."/>
            <person name="Souza K.R.L."/>
            <person name="Souza R.C."/>
            <person name="Steffens M.B.R."/>
            <person name="Steindel M."/>
            <person name="Teixeira S.R."/>
            <person name="Urmenyi T."/>
            <person name="Vettore A."/>
            <person name="Wassem R."/>
            <person name="Zaha A."/>
            <person name="Simpson A.J.G."/>
        </authorList>
    </citation>
    <scope>NUCLEOTIDE SEQUENCE [LARGE SCALE GENOMIC DNA]</scope>
    <source>
        <strain>ATCC 12472 / DSM 30191 / JCM 1249 / CCUG 213 / NBRC 12614 / NCIMB 9131 / NCTC 9757 / MK</strain>
    </source>
</reference>
<sequence length="212" mass="23480">MSSEVRRGRFITLEGIDGAGKSTHLSFIRDWLARHGVDAAFTREPGGTPLSEKIRDLLLDPGTVASLDAEALLAFAARQQHIAEVIEPALAAGRWLVSDRFTDSTYAFQGGGRGVPFERIRALEDWVQRGLQPDLTLLFDLPTEVAAGRMAGTRVPDRFEQEAADFHRRVRAAYLRRAEEAPQRIAVLDASRGIADIQADIVLHLERLLERG</sequence>
<name>KTHY_CHRVO</name>
<proteinExistence type="inferred from homology"/>
<keyword id="KW-0067">ATP-binding</keyword>
<keyword id="KW-0418">Kinase</keyword>
<keyword id="KW-0545">Nucleotide biosynthesis</keyword>
<keyword id="KW-0547">Nucleotide-binding</keyword>
<keyword id="KW-1185">Reference proteome</keyword>
<keyword id="KW-0808">Transferase</keyword>